<sequence length="124" mass="14718">MAITKINDCFELLSMVTYADKLKSLIKKEFSISFEEFAVLTYISENKEKEYYLKDIINHLNYKQPQVVKAVKILSQEDYFDKKRNEHDERTVLILVNAQQRKKIESLLSRVNKRITEANNEIEL</sequence>
<name>SARA_STAAN</name>
<keyword id="KW-0010">Activator</keyword>
<keyword id="KW-0963">Cytoplasm</keyword>
<keyword id="KW-0238">DNA-binding</keyword>
<keyword id="KW-0479">Metal-binding</keyword>
<keyword id="KW-0678">Repressor</keyword>
<keyword id="KW-0804">Transcription</keyword>
<keyword id="KW-0805">Transcription regulation</keyword>
<keyword id="KW-0843">Virulence</keyword>
<accession>Q7A732</accession>
<feature type="initiator methionine" description="Removed" evidence="1">
    <location>
        <position position="1"/>
    </location>
</feature>
<feature type="chain" id="PRO_0000219579" description="Transcriptional regulator SarA">
    <location>
        <begin position="2"/>
        <end position="124"/>
    </location>
</feature>
<feature type="binding site" evidence="1">
    <location>
        <position position="7"/>
    </location>
    <ligand>
        <name>a divalent metal cation</name>
        <dbReference type="ChEBI" id="CHEBI:60240"/>
    </ligand>
</feature>
<feature type="binding site" evidence="1">
    <location>
        <position position="8"/>
    </location>
    <ligand>
        <name>a divalent metal cation</name>
        <dbReference type="ChEBI" id="CHEBI:60240"/>
    </ligand>
</feature>
<feature type="binding site" evidence="1">
    <location>
        <position position="11"/>
    </location>
    <ligand>
        <name>a divalent metal cation</name>
        <dbReference type="ChEBI" id="CHEBI:60240"/>
    </ligand>
</feature>
<dbReference type="EMBL" id="BA000018">
    <property type="protein sequence ID" value="BAB41805.1"/>
    <property type="molecule type" value="Genomic_DNA"/>
</dbReference>
<dbReference type="PIR" id="B89831">
    <property type="entry name" value="B89831"/>
</dbReference>
<dbReference type="RefSeq" id="WP_001018677.1">
    <property type="nucleotide sequence ID" value="NC_002745.2"/>
</dbReference>
<dbReference type="SMR" id="Q7A732"/>
<dbReference type="EnsemblBacteria" id="BAB41805">
    <property type="protein sequence ID" value="BAB41805"/>
    <property type="gene ID" value="BAB41805"/>
</dbReference>
<dbReference type="KEGG" id="sau:SA0573"/>
<dbReference type="HOGENOM" id="CLU_164084_0_0_9"/>
<dbReference type="PRO" id="PR:Q7A732"/>
<dbReference type="GO" id="GO:0005737">
    <property type="term" value="C:cytoplasm"/>
    <property type="evidence" value="ECO:0007669"/>
    <property type="project" value="UniProtKB-SubCell"/>
</dbReference>
<dbReference type="GO" id="GO:0003677">
    <property type="term" value="F:DNA binding"/>
    <property type="evidence" value="ECO:0007669"/>
    <property type="project" value="UniProtKB-KW"/>
</dbReference>
<dbReference type="GO" id="GO:0003700">
    <property type="term" value="F:DNA-binding transcription factor activity"/>
    <property type="evidence" value="ECO:0007669"/>
    <property type="project" value="InterPro"/>
</dbReference>
<dbReference type="GO" id="GO:0046872">
    <property type="term" value="F:metal ion binding"/>
    <property type="evidence" value="ECO:0007669"/>
    <property type="project" value="UniProtKB-KW"/>
</dbReference>
<dbReference type="GO" id="GO:0006950">
    <property type="term" value="P:response to stress"/>
    <property type="evidence" value="ECO:0007669"/>
    <property type="project" value="TreeGrafter"/>
</dbReference>
<dbReference type="FunFam" id="1.10.10.10:FF:000541">
    <property type="entry name" value="Transcriptional regulator SarA"/>
    <property type="match status" value="1"/>
</dbReference>
<dbReference type="Gene3D" id="1.10.10.10">
    <property type="entry name" value="Winged helix-like DNA-binding domain superfamily/Winged helix DNA-binding domain"/>
    <property type="match status" value="1"/>
</dbReference>
<dbReference type="InterPro" id="IPR039422">
    <property type="entry name" value="MarR/SlyA-like"/>
</dbReference>
<dbReference type="InterPro" id="IPR010166">
    <property type="entry name" value="SarA/Rot_dom"/>
</dbReference>
<dbReference type="InterPro" id="IPR055166">
    <property type="entry name" value="Transc_reg_Sar_Rot_HTH"/>
</dbReference>
<dbReference type="InterPro" id="IPR036388">
    <property type="entry name" value="WH-like_DNA-bd_sf"/>
</dbReference>
<dbReference type="InterPro" id="IPR036390">
    <property type="entry name" value="WH_DNA-bd_sf"/>
</dbReference>
<dbReference type="NCBIfam" id="TIGR01889">
    <property type="entry name" value="Staph_reg_Sar"/>
    <property type="match status" value="1"/>
</dbReference>
<dbReference type="NCBIfam" id="NF038268">
    <property type="entry name" value="TF_SarA"/>
    <property type="match status" value="1"/>
</dbReference>
<dbReference type="PANTHER" id="PTHR33164:SF5">
    <property type="entry name" value="ORGANIC HYDROPEROXIDE RESISTANCE TRANSCRIPTIONAL REGULATOR"/>
    <property type="match status" value="1"/>
</dbReference>
<dbReference type="PANTHER" id="PTHR33164">
    <property type="entry name" value="TRANSCRIPTIONAL REGULATOR, MARR FAMILY"/>
    <property type="match status" value="1"/>
</dbReference>
<dbReference type="Pfam" id="PF22381">
    <property type="entry name" value="Staph_reg_Sar_Rot"/>
    <property type="match status" value="1"/>
</dbReference>
<dbReference type="SUPFAM" id="SSF46785">
    <property type="entry name" value="Winged helix' DNA-binding domain"/>
    <property type="match status" value="1"/>
</dbReference>
<evidence type="ECO:0000250" key="1"/>
<evidence type="ECO:0000305" key="2"/>
<comment type="function">
    <text evidence="1">Global regulator with both positive and negative effects that controls the expression of several virulence factors and the biofilm formation process in a cell density-dependent manner.</text>
</comment>
<comment type="subunit">
    <text evidence="1">Homodimer.</text>
</comment>
<comment type="subcellular location">
    <subcellularLocation>
        <location evidence="1">Cytoplasm</location>
    </subcellularLocation>
</comment>
<comment type="similarity">
    <text evidence="2">Belongs to the SarA family.</text>
</comment>
<reference key="1">
    <citation type="journal article" date="2001" name="Lancet">
        <title>Whole genome sequencing of meticillin-resistant Staphylococcus aureus.</title>
        <authorList>
            <person name="Kuroda M."/>
            <person name="Ohta T."/>
            <person name="Uchiyama I."/>
            <person name="Baba T."/>
            <person name="Yuzawa H."/>
            <person name="Kobayashi I."/>
            <person name="Cui L."/>
            <person name="Oguchi A."/>
            <person name="Aoki K."/>
            <person name="Nagai Y."/>
            <person name="Lian J.-Q."/>
            <person name="Ito T."/>
            <person name="Kanamori M."/>
            <person name="Matsumaru H."/>
            <person name="Maruyama A."/>
            <person name="Murakami H."/>
            <person name="Hosoyama A."/>
            <person name="Mizutani-Ui Y."/>
            <person name="Takahashi N.K."/>
            <person name="Sawano T."/>
            <person name="Inoue R."/>
            <person name="Kaito C."/>
            <person name="Sekimizu K."/>
            <person name="Hirakawa H."/>
            <person name="Kuhara S."/>
            <person name="Goto S."/>
            <person name="Yabuzaki J."/>
            <person name="Kanehisa M."/>
            <person name="Yamashita A."/>
            <person name="Oshima K."/>
            <person name="Furuya K."/>
            <person name="Yoshino C."/>
            <person name="Shiba T."/>
            <person name="Hattori M."/>
            <person name="Ogasawara N."/>
            <person name="Hayashi H."/>
            <person name="Hiramatsu K."/>
        </authorList>
    </citation>
    <scope>NUCLEOTIDE SEQUENCE [LARGE SCALE GENOMIC DNA]</scope>
    <source>
        <strain>N315</strain>
    </source>
</reference>
<reference key="2">
    <citation type="submission" date="2007-10" db="UniProtKB">
        <title>Shotgun proteomic analysis of total and membrane protein extracts of S. aureus strain N315.</title>
        <authorList>
            <person name="Vaezzadeh A.R."/>
            <person name="Deshusses J."/>
            <person name="Lescuyer P."/>
            <person name="Hochstrasser D.F."/>
        </authorList>
    </citation>
    <scope>IDENTIFICATION BY MASS SPECTROMETRY [LARGE SCALE ANALYSIS]</scope>
    <source>
        <strain>N315</strain>
    </source>
</reference>
<gene>
    <name type="primary">sarA</name>
    <name type="ordered locus">SA0573</name>
</gene>
<protein>
    <recommendedName>
        <fullName>Transcriptional regulator SarA</fullName>
    </recommendedName>
    <alternativeName>
        <fullName>Staphylococcal accessory regulator A</fullName>
    </alternativeName>
</protein>
<proteinExistence type="evidence at protein level"/>
<organism>
    <name type="scientific">Staphylococcus aureus (strain N315)</name>
    <dbReference type="NCBI Taxonomy" id="158879"/>
    <lineage>
        <taxon>Bacteria</taxon>
        <taxon>Bacillati</taxon>
        <taxon>Bacillota</taxon>
        <taxon>Bacilli</taxon>
        <taxon>Bacillales</taxon>
        <taxon>Staphylococcaceae</taxon>
        <taxon>Staphylococcus</taxon>
    </lineage>
</organism>